<keyword id="KW-0227">DNA damage</keyword>
<keyword id="KW-0233">DNA recombination</keyword>
<keyword id="KW-0234">DNA repair</keyword>
<keyword id="KW-0479">Metal-binding</keyword>
<keyword id="KW-1185">Reference proteome</keyword>
<keyword id="KW-0862">Zinc</keyword>
<keyword id="KW-0863">Zinc-finger</keyword>
<feature type="chain" id="PRO_0000190273" description="Recombination protein RecR">
    <location>
        <begin position="1"/>
        <end position="198"/>
    </location>
</feature>
<feature type="domain" description="Toprim" evidence="1">
    <location>
        <begin position="80"/>
        <end position="175"/>
    </location>
</feature>
<feature type="zinc finger region" description="C4-type" evidence="1">
    <location>
        <begin position="57"/>
        <end position="72"/>
    </location>
</feature>
<reference key="1">
    <citation type="journal article" date="2003" name="Nature">
        <title>The genome sequence of Bacillus anthracis Ames and comparison to closely related bacteria.</title>
        <authorList>
            <person name="Read T.D."/>
            <person name="Peterson S.N."/>
            <person name="Tourasse N.J."/>
            <person name="Baillie L.W."/>
            <person name="Paulsen I.T."/>
            <person name="Nelson K.E."/>
            <person name="Tettelin H."/>
            <person name="Fouts D.E."/>
            <person name="Eisen J.A."/>
            <person name="Gill S.R."/>
            <person name="Holtzapple E.K."/>
            <person name="Okstad O.A."/>
            <person name="Helgason E."/>
            <person name="Rilstone J."/>
            <person name="Wu M."/>
            <person name="Kolonay J.F."/>
            <person name="Beanan M.J."/>
            <person name="Dodson R.J."/>
            <person name="Brinkac L.M."/>
            <person name="Gwinn M.L."/>
            <person name="DeBoy R.T."/>
            <person name="Madpu R."/>
            <person name="Daugherty S.C."/>
            <person name="Durkin A.S."/>
            <person name="Haft D.H."/>
            <person name="Nelson W.C."/>
            <person name="Peterson J.D."/>
            <person name="Pop M."/>
            <person name="Khouri H.M."/>
            <person name="Radune D."/>
            <person name="Benton J.L."/>
            <person name="Mahamoud Y."/>
            <person name="Jiang L."/>
            <person name="Hance I.R."/>
            <person name="Weidman J.F."/>
            <person name="Berry K.J."/>
            <person name="Plaut R.D."/>
            <person name="Wolf A.M."/>
            <person name="Watkins K.L."/>
            <person name="Nierman W.C."/>
            <person name="Hazen A."/>
            <person name="Cline R.T."/>
            <person name="Redmond C."/>
            <person name="Thwaite J.E."/>
            <person name="White O."/>
            <person name="Salzberg S.L."/>
            <person name="Thomason B."/>
            <person name="Friedlander A.M."/>
            <person name="Koehler T.M."/>
            <person name="Hanna P.C."/>
            <person name="Kolstoe A.-B."/>
            <person name="Fraser C.M."/>
        </authorList>
    </citation>
    <scope>NUCLEOTIDE SEQUENCE [LARGE SCALE GENOMIC DNA]</scope>
    <source>
        <strain>Ames / isolate Porton</strain>
    </source>
</reference>
<reference key="2">
    <citation type="journal article" date="2009" name="J. Bacteriol.">
        <title>The complete genome sequence of Bacillus anthracis Ames 'Ancestor'.</title>
        <authorList>
            <person name="Ravel J."/>
            <person name="Jiang L."/>
            <person name="Stanley S.T."/>
            <person name="Wilson M.R."/>
            <person name="Decker R.S."/>
            <person name="Read T.D."/>
            <person name="Worsham P."/>
            <person name="Keim P.S."/>
            <person name="Salzberg S.L."/>
            <person name="Fraser-Liggett C.M."/>
            <person name="Rasko D.A."/>
        </authorList>
    </citation>
    <scope>NUCLEOTIDE SEQUENCE [LARGE SCALE GENOMIC DNA]</scope>
    <source>
        <strain>Ames ancestor</strain>
    </source>
</reference>
<reference key="3">
    <citation type="submission" date="2004-01" db="EMBL/GenBank/DDBJ databases">
        <title>Complete genome sequence of Bacillus anthracis Sterne.</title>
        <authorList>
            <person name="Brettin T.S."/>
            <person name="Bruce D."/>
            <person name="Challacombe J.F."/>
            <person name="Gilna P."/>
            <person name="Han C."/>
            <person name="Hill K."/>
            <person name="Hitchcock P."/>
            <person name="Jackson P."/>
            <person name="Keim P."/>
            <person name="Longmire J."/>
            <person name="Lucas S."/>
            <person name="Okinaka R."/>
            <person name="Richardson P."/>
            <person name="Rubin E."/>
            <person name="Tice H."/>
        </authorList>
    </citation>
    <scope>NUCLEOTIDE SEQUENCE [LARGE SCALE GENOMIC DNA]</scope>
    <source>
        <strain>Sterne</strain>
    </source>
</reference>
<protein>
    <recommendedName>
        <fullName evidence="1">Recombination protein RecR</fullName>
    </recommendedName>
</protein>
<dbReference type="EMBL" id="AE016879">
    <property type="protein sequence ID" value="AAP24078.1"/>
    <property type="molecule type" value="Genomic_DNA"/>
</dbReference>
<dbReference type="EMBL" id="AE017334">
    <property type="protein sequence ID" value="AAT29100.1"/>
    <property type="molecule type" value="Genomic_DNA"/>
</dbReference>
<dbReference type="EMBL" id="AE017225">
    <property type="protein sequence ID" value="AAT52362.1"/>
    <property type="molecule type" value="Genomic_DNA"/>
</dbReference>
<dbReference type="RefSeq" id="NP_842592.1">
    <property type="nucleotide sequence ID" value="NC_003997.3"/>
</dbReference>
<dbReference type="RefSeq" id="WP_000559171.1">
    <property type="nucleotide sequence ID" value="NZ_WXXJ01000016.1"/>
</dbReference>
<dbReference type="RefSeq" id="YP_026311.1">
    <property type="nucleotide sequence ID" value="NC_005945.1"/>
</dbReference>
<dbReference type="SMR" id="Q81W16"/>
<dbReference type="STRING" id="261594.GBAA_0021"/>
<dbReference type="DNASU" id="1088835"/>
<dbReference type="GeneID" id="45020060"/>
<dbReference type="KEGG" id="ban:BA_0021"/>
<dbReference type="KEGG" id="bar:GBAA_0021"/>
<dbReference type="KEGG" id="bat:BAS0023"/>
<dbReference type="PATRIC" id="fig|198094.11.peg.21"/>
<dbReference type="eggNOG" id="COG0353">
    <property type="taxonomic scope" value="Bacteria"/>
</dbReference>
<dbReference type="HOGENOM" id="CLU_060739_1_0_9"/>
<dbReference type="OMA" id="DVMAIEN"/>
<dbReference type="OrthoDB" id="9802672at2"/>
<dbReference type="Proteomes" id="UP000000427">
    <property type="component" value="Chromosome"/>
</dbReference>
<dbReference type="Proteomes" id="UP000000594">
    <property type="component" value="Chromosome"/>
</dbReference>
<dbReference type="GO" id="GO:0003677">
    <property type="term" value="F:DNA binding"/>
    <property type="evidence" value="ECO:0007669"/>
    <property type="project" value="UniProtKB-UniRule"/>
</dbReference>
<dbReference type="GO" id="GO:0008270">
    <property type="term" value="F:zinc ion binding"/>
    <property type="evidence" value="ECO:0007669"/>
    <property type="project" value="UniProtKB-KW"/>
</dbReference>
<dbReference type="GO" id="GO:0006310">
    <property type="term" value="P:DNA recombination"/>
    <property type="evidence" value="ECO:0007669"/>
    <property type="project" value="UniProtKB-UniRule"/>
</dbReference>
<dbReference type="GO" id="GO:0006281">
    <property type="term" value="P:DNA repair"/>
    <property type="evidence" value="ECO:0007669"/>
    <property type="project" value="UniProtKB-UniRule"/>
</dbReference>
<dbReference type="CDD" id="cd01025">
    <property type="entry name" value="TOPRIM_recR"/>
    <property type="match status" value="1"/>
</dbReference>
<dbReference type="Gene3D" id="3.30.60.80">
    <property type="match status" value="1"/>
</dbReference>
<dbReference type="Gene3D" id="3.40.1360.10">
    <property type="match status" value="1"/>
</dbReference>
<dbReference type="Gene3D" id="6.10.250.240">
    <property type="match status" value="1"/>
</dbReference>
<dbReference type="Gene3D" id="1.10.8.420">
    <property type="entry name" value="RecR Domain 1"/>
    <property type="match status" value="1"/>
</dbReference>
<dbReference type="HAMAP" id="MF_00017">
    <property type="entry name" value="RecR"/>
    <property type="match status" value="1"/>
</dbReference>
<dbReference type="InterPro" id="IPR000093">
    <property type="entry name" value="DNA_Rcmb_RecR"/>
</dbReference>
<dbReference type="InterPro" id="IPR023627">
    <property type="entry name" value="Rcmb_RecR"/>
</dbReference>
<dbReference type="InterPro" id="IPR015967">
    <property type="entry name" value="Rcmb_RecR_Znf"/>
</dbReference>
<dbReference type="InterPro" id="IPR006171">
    <property type="entry name" value="TOPRIM_dom"/>
</dbReference>
<dbReference type="InterPro" id="IPR034137">
    <property type="entry name" value="TOPRIM_RecR"/>
</dbReference>
<dbReference type="NCBIfam" id="TIGR00615">
    <property type="entry name" value="recR"/>
    <property type="match status" value="1"/>
</dbReference>
<dbReference type="PANTHER" id="PTHR30446">
    <property type="entry name" value="RECOMBINATION PROTEIN RECR"/>
    <property type="match status" value="1"/>
</dbReference>
<dbReference type="PANTHER" id="PTHR30446:SF0">
    <property type="entry name" value="RECOMBINATION PROTEIN RECR"/>
    <property type="match status" value="1"/>
</dbReference>
<dbReference type="Pfam" id="PF21175">
    <property type="entry name" value="RecR_C"/>
    <property type="match status" value="1"/>
</dbReference>
<dbReference type="Pfam" id="PF21176">
    <property type="entry name" value="RecR_HhH"/>
    <property type="match status" value="1"/>
</dbReference>
<dbReference type="Pfam" id="PF02132">
    <property type="entry name" value="RecR_ZnF"/>
    <property type="match status" value="1"/>
</dbReference>
<dbReference type="Pfam" id="PF13662">
    <property type="entry name" value="Toprim_4"/>
    <property type="match status" value="1"/>
</dbReference>
<dbReference type="SMART" id="SM00493">
    <property type="entry name" value="TOPRIM"/>
    <property type="match status" value="1"/>
</dbReference>
<dbReference type="SUPFAM" id="SSF111304">
    <property type="entry name" value="Recombination protein RecR"/>
    <property type="match status" value="1"/>
</dbReference>
<dbReference type="PROSITE" id="PS01300">
    <property type="entry name" value="RECR"/>
    <property type="match status" value="1"/>
</dbReference>
<dbReference type="PROSITE" id="PS50880">
    <property type="entry name" value="TOPRIM"/>
    <property type="match status" value="1"/>
</dbReference>
<organism>
    <name type="scientific">Bacillus anthracis</name>
    <dbReference type="NCBI Taxonomy" id="1392"/>
    <lineage>
        <taxon>Bacteria</taxon>
        <taxon>Bacillati</taxon>
        <taxon>Bacillota</taxon>
        <taxon>Bacilli</taxon>
        <taxon>Bacillales</taxon>
        <taxon>Bacillaceae</taxon>
        <taxon>Bacillus</taxon>
        <taxon>Bacillus cereus group</taxon>
    </lineage>
</organism>
<name>RECR_BACAN</name>
<proteinExistence type="inferred from homology"/>
<sequence>MHYPEPISKLIDSFMKLPGIGPKTAVRLAFFVLDMKEDDVLGFAKALVNAKRDLAYCSVCGHITDRDPCYICNDSHRDQSVVCVVQEPKDVIAMEKMKEYQGVYHVLRGAISPMGGIGPEDINIPQLLKRLHDETVQEVILATNPNIEGEATAMYISRLLKPTGIKVTRIAHGLPVGGDLEYADEVTLSKALEGRREV</sequence>
<evidence type="ECO:0000255" key="1">
    <source>
        <dbReference type="HAMAP-Rule" id="MF_00017"/>
    </source>
</evidence>
<comment type="function">
    <text evidence="1">May play a role in DNA repair. It seems to be involved in an RecBC-independent recombinational process of DNA repair. It may act with RecF and RecO.</text>
</comment>
<comment type="similarity">
    <text evidence="1">Belongs to the RecR family.</text>
</comment>
<accession>Q81W16</accession>
<accession>Q6I519</accession>
<accession>Q6KYR3</accession>
<gene>
    <name evidence="1" type="primary">recR</name>
    <name type="ordered locus">BA_0021</name>
    <name type="ordered locus">GBAA_0021</name>
    <name type="ordered locus">BAS0023</name>
</gene>